<organism>
    <name type="scientific">Caulobacter sp. (strain K31)</name>
    <dbReference type="NCBI Taxonomy" id="366602"/>
    <lineage>
        <taxon>Bacteria</taxon>
        <taxon>Pseudomonadati</taxon>
        <taxon>Pseudomonadota</taxon>
        <taxon>Alphaproteobacteria</taxon>
        <taxon>Caulobacterales</taxon>
        <taxon>Caulobacteraceae</taxon>
        <taxon>Caulobacter</taxon>
    </lineage>
</organism>
<keyword id="KW-0143">Chaperone</keyword>
<keyword id="KW-0963">Cytoplasm</keyword>
<keyword id="KW-0653">Protein transport</keyword>
<keyword id="KW-0811">Translocation</keyword>
<keyword id="KW-0813">Transport</keyword>
<protein>
    <recommendedName>
        <fullName evidence="1">Protein-export protein SecB</fullName>
    </recommendedName>
</protein>
<comment type="function">
    <text evidence="1">One of the proteins required for the normal export of preproteins out of the cell cytoplasm. It is a molecular chaperone that binds to a subset of precursor proteins, maintaining them in a translocation-competent state. It also specifically binds to its receptor SecA.</text>
</comment>
<comment type="subunit">
    <text evidence="1">Homotetramer, a dimer of dimers. One homotetramer interacts with 1 SecA dimer.</text>
</comment>
<comment type="subcellular location">
    <subcellularLocation>
        <location evidence="1">Cytoplasm</location>
    </subcellularLocation>
</comment>
<comment type="similarity">
    <text evidence="1">Belongs to the SecB family.</text>
</comment>
<accession>B0T6F4</accession>
<sequence>MTDTTAAPPAAPEDGAPGETGIRIIAQFVRDFSFESPHAPDSLRAGGAPPAIDMGVEMNARGRPDGLFEVDLKLSARATRDEQPVFHVEVLYGGLFHIAGVPEGDLEPVLLIECPRFLFPYARRLISDVTTEGGFPPFLIDPIDFAGVYAARKAQAEGVVVGNA</sequence>
<reference key="1">
    <citation type="submission" date="2008-01" db="EMBL/GenBank/DDBJ databases">
        <title>Complete sequence of chromosome of Caulobacter sp. K31.</title>
        <authorList>
            <consortium name="US DOE Joint Genome Institute"/>
            <person name="Copeland A."/>
            <person name="Lucas S."/>
            <person name="Lapidus A."/>
            <person name="Barry K."/>
            <person name="Glavina del Rio T."/>
            <person name="Dalin E."/>
            <person name="Tice H."/>
            <person name="Pitluck S."/>
            <person name="Bruce D."/>
            <person name="Goodwin L."/>
            <person name="Thompson L.S."/>
            <person name="Brettin T."/>
            <person name="Detter J.C."/>
            <person name="Han C."/>
            <person name="Schmutz J."/>
            <person name="Larimer F."/>
            <person name="Land M."/>
            <person name="Hauser L."/>
            <person name="Kyrpides N."/>
            <person name="Kim E."/>
            <person name="Stephens C."/>
            <person name="Richardson P."/>
        </authorList>
    </citation>
    <scope>NUCLEOTIDE SEQUENCE [LARGE SCALE GENOMIC DNA]</scope>
    <source>
        <strain>K31</strain>
    </source>
</reference>
<proteinExistence type="inferred from homology"/>
<gene>
    <name evidence="1" type="primary">secB</name>
    <name type="ordered locus">Caul_5037</name>
</gene>
<evidence type="ECO:0000255" key="1">
    <source>
        <dbReference type="HAMAP-Rule" id="MF_00821"/>
    </source>
</evidence>
<dbReference type="EMBL" id="CP000927">
    <property type="protein sequence ID" value="ABZ74157.1"/>
    <property type="molecule type" value="Genomic_DNA"/>
</dbReference>
<dbReference type="SMR" id="B0T6F4"/>
<dbReference type="STRING" id="366602.Caul_5037"/>
<dbReference type="KEGG" id="cak:Caul_5037"/>
<dbReference type="eggNOG" id="COG1952">
    <property type="taxonomic scope" value="Bacteria"/>
</dbReference>
<dbReference type="HOGENOM" id="CLU_111574_0_0_5"/>
<dbReference type="OrthoDB" id="9795145at2"/>
<dbReference type="GO" id="GO:0005737">
    <property type="term" value="C:cytoplasm"/>
    <property type="evidence" value="ECO:0007669"/>
    <property type="project" value="UniProtKB-SubCell"/>
</dbReference>
<dbReference type="GO" id="GO:0051082">
    <property type="term" value="F:unfolded protein binding"/>
    <property type="evidence" value="ECO:0007669"/>
    <property type="project" value="InterPro"/>
</dbReference>
<dbReference type="GO" id="GO:0006457">
    <property type="term" value="P:protein folding"/>
    <property type="evidence" value="ECO:0007669"/>
    <property type="project" value="UniProtKB-UniRule"/>
</dbReference>
<dbReference type="GO" id="GO:0051262">
    <property type="term" value="P:protein tetramerization"/>
    <property type="evidence" value="ECO:0007669"/>
    <property type="project" value="InterPro"/>
</dbReference>
<dbReference type="GO" id="GO:0015031">
    <property type="term" value="P:protein transport"/>
    <property type="evidence" value="ECO:0007669"/>
    <property type="project" value="UniProtKB-UniRule"/>
</dbReference>
<dbReference type="Gene3D" id="3.10.420.10">
    <property type="entry name" value="SecB-like"/>
    <property type="match status" value="1"/>
</dbReference>
<dbReference type="HAMAP" id="MF_00821">
    <property type="entry name" value="SecB"/>
    <property type="match status" value="1"/>
</dbReference>
<dbReference type="InterPro" id="IPR003708">
    <property type="entry name" value="SecB"/>
</dbReference>
<dbReference type="InterPro" id="IPR035958">
    <property type="entry name" value="SecB-like_sf"/>
</dbReference>
<dbReference type="NCBIfam" id="NF004392">
    <property type="entry name" value="PRK05751.1-3"/>
    <property type="match status" value="1"/>
</dbReference>
<dbReference type="NCBIfam" id="TIGR00809">
    <property type="entry name" value="secB"/>
    <property type="match status" value="1"/>
</dbReference>
<dbReference type="PANTHER" id="PTHR36918">
    <property type="match status" value="1"/>
</dbReference>
<dbReference type="PANTHER" id="PTHR36918:SF1">
    <property type="entry name" value="PROTEIN-EXPORT PROTEIN SECB"/>
    <property type="match status" value="1"/>
</dbReference>
<dbReference type="Pfam" id="PF02556">
    <property type="entry name" value="SecB"/>
    <property type="match status" value="1"/>
</dbReference>
<dbReference type="PRINTS" id="PR01594">
    <property type="entry name" value="SECBCHAPRONE"/>
</dbReference>
<dbReference type="SUPFAM" id="SSF54611">
    <property type="entry name" value="SecB-like"/>
    <property type="match status" value="1"/>
</dbReference>
<feature type="chain" id="PRO_1000148699" description="Protein-export protein SecB">
    <location>
        <begin position="1"/>
        <end position="164"/>
    </location>
</feature>
<name>SECB_CAUSK</name>